<sequence>MPLTNTQIRYYDSNVLRLPKDKRETYNAQVDRLITALRKKLKDQDKITIKRVVKAGSFAKHTILRKTSDSQVDVDVVFYVSGEKVAEETFASLSEKIYEALLKMYPNKAVEDFEIQRKAATVSFVGTGLDVDIVPVIENPDKEGYGWQFDRIDGSKTETCAPCQIKFVKERKDQDPDFRTLVRLAKRWRTNMECPLKSFHIELIMAHVLEVNGKDGSLEKRFRDFLLYIAESGLKEVITFPENSTIPAFSHPVVILDPVCDTNNVTSRITEDERKEIVRIAEKSWATANFASVEGDYDIWKELFGRSFKVEDAA</sequence>
<proteinExistence type="evidence at protein level"/>
<evidence type="ECO:0000250" key="1">
    <source>
        <dbReference type="UniProtKB" id="D7Y2H2"/>
    </source>
</evidence>
<evidence type="ECO:0000269" key="2">
    <source>
    </source>
</evidence>
<evidence type="ECO:0000269" key="3">
    <source>
    </source>
</evidence>
<evidence type="ECO:0000303" key="4">
    <source>
    </source>
</evidence>
<evidence type="ECO:0000303" key="5">
    <source>
    </source>
</evidence>
<evidence type="ECO:0000305" key="6"/>
<evidence type="ECO:0000305" key="7">
    <source>
    </source>
</evidence>
<evidence type="ECO:0000312" key="8">
    <source>
        <dbReference type="EMBL" id="ELC78141.1"/>
    </source>
</evidence>
<accession>P0DX69</accession>
<protein>
    <recommendedName>
        <fullName evidence="6">CBASS oligonucleotide cyclase CdnC</fullName>
        <ecNumber evidence="1">2.7.7.-</ecNumber>
    </recommendedName>
    <alternativeName>
        <fullName evidence="4">CD-NTase019</fullName>
    </alternativeName>
</protein>
<name>CDNC_ECOKT</name>
<feature type="chain" id="PRO_0000459328" description="CBASS oligonucleotide cyclase CdnC">
    <location>
        <begin position="1"/>
        <end position="314"/>
    </location>
</feature>
<feature type="binding site" evidence="1">
    <location>
        <position position="60"/>
    </location>
    <ligand>
        <name>ATP</name>
        <dbReference type="ChEBI" id="CHEBI:30616"/>
    </ligand>
</feature>
<feature type="binding site" evidence="1">
    <location>
        <position position="73"/>
    </location>
    <ligand>
        <name>Mg(2+)</name>
        <dbReference type="ChEBI" id="CHEBI:18420"/>
    </ligand>
</feature>
<feature type="binding site" evidence="1">
    <location>
        <position position="75"/>
    </location>
    <ligand>
        <name>ATP</name>
        <dbReference type="ChEBI" id="CHEBI:30616"/>
    </ligand>
</feature>
<feature type="binding site" evidence="1">
    <location>
        <position position="75"/>
    </location>
    <ligand>
        <name>Mg(2+)</name>
        <dbReference type="ChEBI" id="CHEBI:18420"/>
    </ligand>
</feature>
<feature type="binding site" evidence="1">
    <location>
        <position position="186"/>
    </location>
    <ligand>
        <name>ATP</name>
        <dbReference type="ChEBI" id="CHEBI:30616"/>
    </ligand>
</feature>
<feature type="binding site" evidence="1">
    <location>
        <begin position="197"/>
        <end position="199"/>
    </location>
    <ligand>
        <name>ATP</name>
        <dbReference type="ChEBI" id="CHEBI:30616"/>
    </ligand>
</feature>
<feature type="binding site" evidence="1">
    <location>
        <position position="263"/>
    </location>
    <ligand>
        <name>ATP</name>
        <dbReference type="ChEBI" id="CHEBI:30616"/>
    </ligand>
</feature>
<dbReference type="EC" id="2.7.7.-" evidence="1"/>
<dbReference type="EMBL" id="ANTE01000038">
    <property type="protein sequence ID" value="ELC78141.1"/>
    <property type="molecule type" value="Genomic_DNA"/>
</dbReference>
<dbReference type="RefSeq" id="WP_001534692.1">
    <property type="nucleotide sequence ID" value="NZ_KB732426.1"/>
</dbReference>
<dbReference type="SMR" id="P0DX69"/>
<dbReference type="GO" id="GO:0005829">
    <property type="term" value="C:cytosol"/>
    <property type="evidence" value="ECO:0007669"/>
    <property type="project" value="TreeGrafter"/>
</dbReference>
<dbReference type="GO" id="GO:0016020">
    <property type="term" value="C:membrane"/>
    <property type="evidence" value="ECO:0007669"/>
    <property type="project" value="TreeGrafter"/>
</dbReference>
<dbReference type="GO" id="GO:0001730">
    <property type="term" value="F:2'-5'-oligoadenylate synthetase activity"/>
    <property type="evidence" value="ECO:0007669"/>
    <property type="project" value="TreeGrafter"/>
</dbReference>
<dbReference type="GO" id="GO:0005524">
    <property type="term" value="F:ATP binding"/>
    <property type="evidence" value="ECO:0007669"/>
    <property type="project" value="UniProtKB-KW"/>
</dbReference>
<dbReference type="GO" id="GO:0003725">
    <property type="term" value="F:double-stranded RNA binding"/>
    <property type="evidence" value="ECO:0007669"/>
    <property type="project" value="TreeGrafter"/>
</dbReference>
<dbReference type="GO" id="GO:0046872">
    <property type="term" value="F:metal ion binding"/>
    <property type="evidence" value="ECO:0007669"/>
    <property type="project" value="UniProtKB-KW"/>
</dbReference>
<dbReference type="GO" id="GO:0051607">
    <property type="term" value="P:defense response to virus"/>
    <property type="evidence" value="ECO:0007669"/>
    <property type="project" value="UniProtKB-KW"/>
</dbReference>
<dbReference type="GO" id="GO:0009117">
    <property type="term" value="P:nucleotide metabolic process"/>
    <property type="evidence" value="ECO:0007669"/>
    <property type="project" value="UniProtKB-KW"/>
</dbReference>
<dbReference type="CDD" id="cd05400">
    <property type="entry name" value="NT_2-5OAS_ClassI-CCAase"/>
    <property type="match status" value="1"/>
</dbReference>
<dbReference type="Gene3D" id="1.10.1410.20">
    <property type="entry name" value="2'-5'-oligoadenylate synthetase 1, domain 2"/>
    <property type="match status" value="1"/>
</dbReference>
<dbReference type="Gene3D" id="3.30.460.10">
    <property type="entry name" value="Beta Polymerase, domain 2"/>
    <property type="match status" value="1"/>
</dbReference>
<dbReference type="InterPro" id="IPR053445">
    <property type="entry name" value="CBASS_cN_synthase"/>
</dbReference>
<dbReference type="InterPro" id="IPR006116">
    <property type="entry name" value="NT_2-5OAS_ClassI-CCAase"/>
</dbReference>
<dbReference type="InterPro" id="IPR043519">
    <property type="entry name" value="NT_sf"/>
</dbReference>
<dbReference type="NCBIfam" id="NF041116">
    <property type="entry name" value="CBASS_cyclase_a"/>
    <property type="match status" value="1"/>
</dbReference>
<dbReference type="PANTHER" id="PTHR11258">
    <property type="entry name" value="2-5 OLIGOADENYLATE SYNTHETASE"/>
    <property type="match status" value="1"/>
</dbReference>
<dbReference type="PANTHER" id="PTHR11258:SF11">
    <property type="entry name" value="C2H2-TYPE DOMAIN-CONTAINING PROTEIN"/>
    <property type="match status" value="1"/>
</dbReference>
<dbReference type="Pfam" id="PF18144">
    <property type="entry name" value="SMODS"/>
    <property type="match status" value="1"/>
</dbReference>
<dbReference type="SUPFAM" id="SSF81301">
    <property type="entry name" value="Nucleotidyltransferase"/>
    <property type="match status" value="1"/>
</dbReference>
<dbReference type="SUPFAM" id="SSF81631">
    <property type="entry name" value="PAP/OAS1 substrate-binding domain"/>
    <property type="match status" value="1"/>
</dbReference>
<organism>
    <name type="scientific">Escherichia coli (strain KTE188)</name>
    <dbReference type="NCBI Taxonomy" id="1181734"/>
    <lineage>
        <taxon>Bacteria</taxon>
        <taxon>Pseudomonadati</taxon>
        <taxon>Pseudomonadota</taxon>
        <taxon>Gammaproteobacteria</taxon>
        <taxon>Enterobacterales</taxon>
        <taxon>Enterobacteriaceae</taxon>
        <taxon>Escherichia</taxon>
    </lineage>
</organism>
<keyword id="KW-0051">Antiviral defense</keyword>
<keyword id="KW-0067">ATP-binding</keyword>
<keyword id="KW-0460">Magnesium</keyword>
<keyword id="KW-0479">Metal-binding</keyword>
<keyword id="KW-0546">Nucleotide metabolism</keyword>
<keyword id="KW-0547">Nucleotide-binding</keyword>
<keyword id="KW-0548">Nucleotidyltransferase</keyword>
<keyword id="KW-0808">Transferase</keyword>
<gene>
    <name evidence="5" type="primary">cdnC</name>
    <name evidence="8" type="ORF">A13M_04332</name>
</gene>
<comment type="function">
    <text evidence="2 3 5 7">Cyclic nucleotide synthase (second messenger synthase) of a CBASS antivirus system (Probable) (PubMed:37595565). CBASS (cyclic oligonucleotide-based antiphage signaling system) provides immunity against bacteriophage (PubMed:37595565). The CD-NTase protein synthesizes cyclic nucleotides in response to infection; these serve as specific second messenger signals (PubMed:37595565). The signals activate a diverse range of effectors, leading to bacterial cell death and thus abortive phage infection (PubMed:37595565). A type III CBASS system (PubMed:37595565). Expression of this CBASS system (Cap18-Cap6-Cap7-CdnC-CapW-Cap17) in a susceptible E.coli (strain MG1655) confers resistance to bacteriophage P1 (PubMed:37595565). Probable cyclic nucleotide synthase that upon activation catalyzes the synthesis of a cyclic nucleotide (Probable) (PubMed:37595565). A cyclase activity for this enzyme was not identified in (PubMed:30787435).</text>
</comment>
<comment type="cofactor">
    <cofactor evidence="1">
        <name>Mg(2+)</name>
        <dbReference type="ChEBI" id="CHEBI:18420"/>
    </cofactor>
</comment>
<comment type="subunit">
    <text evidence="1">Forms complexes with Cap7 with 1:1 and 2:2 stoichimetry, and a 1:1:6 CdnC:Cap7:Cap6 complex.</text>
</comment>
<comment type="similarity">
    <text evidence="4">Belongs to the CD-NTase family. C01 subfamily.</text>
</comment>
<reference key="1">
    <citation type="submission" date="2012-12" db="EMBL/GenBank/DDBJ databases">
        <title>The Genome Sequence of Escherichia coli KTE188.</title>
        <authorList>
            <person name="Feldgarden M."/>
            <person name="Nielsen K.L."/>
            <person name="Frimodt-Moller N."/>
            <person name="Andersen P.S."/>
            <person name="Walker B."/>
            <person name="Young S.K."/>
            <person name="Zeng Q."/>
            <person name="Gargeya S."/>
            <person name="Fitzgerald M."/>
            <person name="Haas B."/>
            <person name="Abouelleil A."/>
            <person name="Alvarado L."/>
            <person name="Arachchi H.M."/>
            <person name="Berlin A.M."/>
            <person name="Chapman S.B."/>
            <person name="Dewar J."/>
            <person name="Goldberg J."/>
            <person name="Griggs A."/>
            <person name="Gujja S."/>
            <person name="Hansen M."/>
            <person name="Howarth C."/>
            <person name="Imamovic A."/>
            <person name="Larimer J."/>
            <person name="McCowan C."/>
            <person name="Murphy C."/>
            <person name="Neiman D."/>
            <person name="Pearson M."/>
            <person name="Priest M."/>
            <person name="Roberts A."/>
            <person name="Saif S."/>
            <person name="Shea T."/>
            <person name="Sisk P."/>
            <person name="Sykes S."/>
            <person name="Wortman J."/>
            <person name="Nusbaum C."/>
            <person name="Birren B."/>
        </authorList>
    </citation>
    <scope>NUCLEOTIDE SEQUENCE [LARGE SCALE GENOMIC DNA]</scope>
    <source>
        <strain>KTE188</strain>
    </source>
</reference>
<reference key="2">
    <citation type="journal article" date="2019" name="Nature">
        <title>Bacterial cGAS-like enzymes synthesize diverse nucleotide signals.</title>
        <authorList>
            <person name="Whiteley A.T."/>
            <person name="Eaglesham J.B."/>
            <person name="de Oliveira Mann C.C."/>
            <person name="Morehouse B.R."/>
            <person name="Lowey B."/>
            <person name="Nieminen E.A."/>
            <person name="Danilchanka O."/>
            <person name="King D.S."/>
            <person name="Lee A.S.Y."/>
            <person name="Mekalanos J.J."/>
            <person name="Kranzusch P.J."/>
        </authorList>
    </citation>
    <scope>NOMENCLATURE</scope>
    <scope>SIMILARITY</scope>
    <source>
        <strain>KTE188</strain>
    </source>
</reference>
<reference key="3">
    <citation type="journal article" date="2023" name="Cell">
        <title>A conserved family of immune effectors cleaves cellular ATP upon viral infection.</title>
        <authorList>
            <person name="Rousset F."/>
            <person name="Yirmiya E."/>
            <person name="Nesher S."/>
            <person name="Brandis A."/>
            <person name="Mehlman T."/>
            <person name="Itkin M."/>
            <person name="Malitsky S."/>
            <person name="Millman A."/>
            <person name="Melamed S."/>
            <person name="Sorek R."/>
        </authorList>
    </citation>
    <scope>FUNCTION IN VIRAL DEFENSE</scope>
    <source>
        <strain>KTE188</strain>
    </source>
</reference>